<accession>Q8U9I9</accession>
<proteinExistence type="inferred from homology"/>
<protein>
    <recommendedName>
        <fullName evidence="1">Phosphoglycerate kinase</fullName>
        <ecNumber evidence="1">2.7.2.3</ecNumber>
    </recommendedName>
</protein>
<comment type="catalytic activity">
    <reaction evidence="1">
        <text>(2R)-3-phosphoglycerate + ATP = (2R)-3-phospho-glyceroyl phosphate + ADP</text>
        <dbReference type="Rhea" id="RHEA:14801"/>
        <dbReference type="ChEBI" id="CHEBI:30616"/>
        <dbReference type="ChEBI" id="CHEBI:57604"/>
        <dbReference type="ChEBI" id="CHEBI:58272"/>
        <dbReference type="ChEBI" id="CHEBI:456216"/>
        <dbReference type="EC" id="2.7.2.3"/>
    </reaction>
</comment>
<comment type="pathway">
    <text evidence="1">Carbohydrate degradation; glycolysis; pyruvate from D-glyceraldehyde 3-phosphate: step 2/5.</text>
</comment>
<comment type="subunit">
    <text evidence="1">Monomer.</text>
</comment>
<comment type="subcellular location">
    <subcellularLocation>
        <location evidence="1">Cytoplasm</location>
    </subcellularLocation>
</comment>
<comment type="similarity">
    <text evidence="1">Belongs to the phosphoglycerate kinase family.</text>
</comment>
<name>PGK_AGRFC</name>
<keyword id="KW-0067">ATP-binding</keyword>
<keyword id="KW-0963">Cytoplasm</keyword>
<keyword id="KW-0324">Glycolysis</keyword>
<keyword id="KW-0418">Kinase</keyword>
<keyword id="KW-0547">Nucleotide-binding</keyword>
<keyword id="KW-1185">Reference proteome</keyword>
<keyword id="KW-0808">Transferase</keyword>
<organism>
    <name type="scientific">Agrobacterium fabrum (strain C58 / ATCC 33970)</name>
    <name type="common">Agrobacterium tumefaciens (strain C58)</name>
    <dbReference type="NCBI Taxonomy" id="176299"/>
    <lineage>
        <taxon>Bacteria</taxon>
        <taxon>Pseudomonadati</taxon>
        <taxon>Pseudomonadota</taxon>
        <taxon>Alphaproteobacteria</taxon>
        <taxon>Hyphomicrobiales</taxon>
        <taxon>Rhizobiaceae</taxon>
        <taxon>Rhizobium/Agrobacterium group</taxon>
        <taxon>Agrobacterium</taxon>
        <taxon>Agrobacterium tumefaciens complex</taxon>
    </lineage>
</organism>
<gene>
    <name evidence="1" type="primary">pgk</name>
    <name type="ordered locus">Atu3739</name>
    <name type="ORF">AGR_L_2193</name>
</gene>
<evidence type="ECO:0000255" key="1">
    <source>
        <dbReference type="HAMAP-Rule" id="MF_00145"/>
    </source>
</evidence>
<feature type="chain" id="PRO_0000145894" description="Phosphoglycerate kinase">
    <location>
        <begin position="1"/>
        <end position="400"/>
    </location>
</feature>
<feature type="binding site" evidence="1">
    <location>
        <begin position="23"/>
        <end position="25"/>
    </location>
    <ligand>
        <name>substrate</name>
    </ligand>
</feature>
<feature type="binding site" evidence="1">
    <location>
        <position position="38"/>
    </location>
    <ligand>
        <name>substrate</name>
    </ligand>
</feature>
<feature type="binding site" evidence="1">
    <location>
        <begin position="61"/>
        <end position="64"/>
    </location>
    <ligand>
        <name>substrate</name>
    </ligand>
</feature>
<feature type="binding site" evidence="1">
    <location>
        <position position="120"/>
    </location>
    <ligand>
        <name>substrate</name>
    </ligand>
</feature>
<feature type="binding site" evidence="1">
    <location>
        <position position="153"/>
    </location>
    <ligand>
        <name>substrate</name>
    </ligand>
</feature>
<feature type="binding site" evidence="1">
    <location>
        <position position="203"/>
    </location>
    <ligand>
        <name>ATP</name>
        <dbReference type="ChEBI" id="CHEBI:30616"/>
    </ligand>
</feature>
<feature type="binding site" evidence="1">
    <location>
        <position position="325"/>
    </location>
    <ligand>
        <name>ATP</name>
        <dbReference type="ChEBI" id="CHEBI:30616"/>
    </ligand>
</feature>
<feature type="binding site" evidence="1">
    <location>
        <begin position="355"/>
        <end position="358"/>
    </location>
    <ligand>
        <name>ATP</name>
        <dbReference type="ChEBI" id="CHEBI:30616"/>
    </ligand>
</feature>
<sequence>MPAFKTIDDLNDIAGKRVLVRVDLNVPVADGKVTDATRIERVAPTILELSSKGAKVILLAHFGRPKGEPVAEMSLSQIVPTVEDVLDHAISFATDCIGAPAADAVAKMNDGDILLLENTRFHKGEEKNDPAFVEELAANGDIYVNDAFSAAHRAHASTEGLARHLPAYAGRTMQAELEALEKGLGQPVRPVVAIVGGAKVSSKIDLLMNLVKKVDALVIGGGMANTFLAARGTNVGKSLCEHDLAETAKQIMIEAATSGCAIVLPEDGVVAREFTAGAANEIVDINAIPADAMVLDVGPKSVESIKAWISRAETLVWNGPLGAFEIEPFDAATVAAAKHAAECTKAGKLVSVAGGGDTVAALNHAGVSDDFTYISTAGGAFLEWMEGKELPGVAILTTAK</sequence>
<reference key="1">
    <citation type="journal article" date="2001" name="Science">
        <title>The genome of the natural genetic engineer Agrobacterium tumefaciens C58.</title>
        <authorList>
            <person name="Wood D.W."/>
            <person name="Setubal J.C."/>
            <person name="Kaul R."/>
            <person name="Monks D.E."/>
            <person name="Kitajima J.P."/>
            <person name="Okura V.K."/>
            <person name="Zhou Y."/>
            <person name="Chen L."/>
            <person name="Wood G.E."/>
            <person name="Almeida N.F. Jr."/>
            <person name="Woo L."/>
            <person name="Chen Y."/>
            <person name="Paulsen I.T."/>
            <person name="Eisen J.A."/>
            <person name="Karp P.D."/>
            <person name="Bovee D. Sr."/>
            <person name="Chapman P."/>
            <person name="Clendenning J."/>
            <person name="Deatherage G."/>
            <person name="Gillet W."/>
            <person name="Grant C."/>
            <person name="Kutyavin T."/>
            <person name="Levy R."/>
            <person name="Li M.-J."/>
            <person name="McClelland E."/>
            <person name="Palmieri A."/>
            <person name="Raymond C."/>
            <person name="Rouse G."/>
            <person name="Saenphimmachak C."/>
            <person name="Wu Z."/>
            <person name="Romero P."/>
            <person name="Gordon D."/>
            <person name="Zhang S."/>
            <person name="Yoo H."/>
            <person name="Tao Y."/>
            <person name="Biddle P."/>
            <person name="Jung M."/>
            <person name="Krespan W."/>
            <person name="Perry M."/>
            <person name="Gordon-Kamm B."/>
            <person name="Liao L."/>
            <person name="Kim S."/>
            <person name="Hendrick C."/>
            <person name="Zhao Z.-Y."/>
            <person name="Dolan M."/>
            <person name="Chumley F."/>
            <person name="Tingey S.V."/>
            <person name="Tomb J.-F."/>
            <person name="Gordon M.P."/>
            <person name="Olson M.V."/>
            <person name="Nester E.W."/>
        </authorList>
    </citation>
    <scope>NUCLEOTIDE SEQUENCE [LARGE SCALE GENOMIC DNA]</scope>
    <source>
        <strain>C58 / ATCC 33970</strain>
    </source>
</reference>
<reference key="2">
    <citation type="journal article" date="2001" name="Science">
        <title>Genome sequence of the plant pathogen and biotechnology agent Agrobacterium tumefaciens C58.</title>
        <authorList>
            <person name="Goodner B."/>
            <person name="Hinkle G."/>
            <person name="Gattung S."/>
            <person name="Miller N."/>
            <person name="Blanchard M."/>
            <person name="Qurollo B."/>
            <person name="Goldman B.S."/>
            <person name="Cao Y."/>
            <person name="Askenazi M."/>
            <person name="Halling C."/>
            <person name="Mullin L."/>
            <person name="Houmiel K."/>
            <person name="Gordon J."/>
            <person name="Vaudin M."/>
            <person name="Iartchouk O."/>
            <person name="Epp A."/>
            <person name="Liu F."/>
            <person name="Wollam C."/>
            <person name="Allinger M."/>
            <person name="Doughty D."/>
            <person name="Scott C."/>
            <person name="Lappas C."/>
            <person name="Markelz B."/>
            <person name="Flanagan C."/>
            <person name="Crowell C."/>
            <person name="Gurson J."/>
            <person name="Lomo C."/>
            <person name="Sear C."/>
            <person name="Strub G."/>
            <person name="Cielo C."/>
            <person name="Slater S."/>
        </authorList>
    </citation>
    <scope>NUCLEOTIDE SEQUENCE [LARGE SCALE GENOMIC DNA]</scope>
    <source>
        <strain>C58 / ATCC 33970</strain>
    </source>
</reference>
<dbReference type="EC" id="2.7.2.3" evidence="1"/>
<dbReference type="EMBL" id="AE007870">
    <property type="protein sequence ID" value="AAK89667.2"/>
    <property type="molecule type" value="Genomic_DNA"/>
</dbReference>
<dbReference type="PIR" id="A96268">
    <property type="entry name" value="A96268"/>
</dbReference>
<dbReference type="PIR" id="AG3016">
    <property type="entry name" value="AG3016"/>
</dbReference>
<dbReference type="RefSeq" id="NP_356882.2">
    <property type="nucleotide sequence ID" value="NC_003063.2"/>
</dbReference>
<dbReference type="RefSeq" id="WP_010973289.1">
    <property type="nucleotide sequence ID" value="NC_003063.2"/>
</dbReference>
<dbReference type="SMR" id="Q8U9I9"/>
<dbReference type="STRING" id="176299.Atu3739"/>
<dbReference type="EnsemblBacteria" id="AAK89667">
    <property type="protein sequence ID" value="AAK89667"/>
    <property type="gene ID" value="Atu3739"/>
</dbReference>
<dbReference type="GeneID" id="1135613"/>
<dbReference type="KEGG" id="atu:Atu3739"/>
<dbReference type="PATRIC" id="fig|176299.10.peg.3571"/>
<dbReference type="eggNOG" id="COG0126">
    <property type="taxonomic scope" value="Bacteria"/>
</dbReference>
<dbReference type="HOGENOM" id="CLU_025427_0_2_5"/>
<dbReference type="OrthoDB" id="9808460at2"/>
<dbReference type="PhylomeDB" id="Q8U9I9"/>
<dbReference type="BioCyc" id="AGRO:ATU3739-MONOMER"/>
<dbReference type="UniPathway" id="UPA00109">
    <property type="reaction ID" value="UER00185"/>
</dbReference>
<dbReference type="Proteomes" id="UP000000813">
    <property type="component" value="Chromosome linear"/>
</dbReference>
<dbReference type="GO" id="GO:0005829">
    <property type="term" value="C:cytosol"/>
    <property type="evidence" value="ECO:0007669"/>
    <property type="project" value="TreeGrafter"/>
</dbReference>
<dbReference type="GO" id="GO:0043531">
    <property type="term" value="F:ADP binding"/>
    <property type="evidence" value="ECO:0007669"/>
    <property type="project" value="TreeGrafter"/>
</dbReference>
<dbReference type="GO" id="GO:0005524">
    <property type="term" value="F:ATP binding"/>
    <property type="evidence" value="ECO:0007669"/>
    <property type="project" value="UniProtKB-KW"/>
</dbReference>
<dbReference type="GO" id="GO:0004618">
    <property type="term" value="F:phosphoglycerate kinase activity"/>
    <property type="evidence" value="ECO:0007669"/>
    <property type="project" value="UniProtKB-UniRule"/>
</dbReference>
<dbReference type="GO" id="GO:0006094">
    <property type="term" value="P:gluconeogenesis"/>
    <property type="evidence" value="ECO:0007669"/>
    <property type="project" value="TreeGrafter"/>
</dbReference>
<dbReference type="GO" id="GO:0006096">
    <property type="term" value="P:glycolytic process"/>
    <property type="evidence" value="ECO:0007669"/>
    <property type="project" value="UniProtKB-UniRule"/>
</dbReference>
<dbReference type="FunFam" id="3.40.50.1260:FF:000006">
    <property type="entry name" value="Phosphoglycerate kinase"/>
    <property type="match status" value="1"/>
</dbReference>
<dbReference type="FunFam" id="3.40.50.1260:FF:000031">
    <property type="entry name" value="Phosphoglycerate kinase 1"/>
    <property type="match status" value="1"/>
</dbReference>
<dbReference type="Gene3D" id="3.40.50.1260">
    <property type="entry name" value="Phosphoglycerate kinase, N-terminal domain"/>
    <property type="match status" value="2"/>
</dbReference>
<dbReference type="HAMAP" id="MF_00145">
    <property type="entry name" value="Phosphoglyc_kinase"/>
    <property type="match status" value="1"/>
</dbReference>
<dbReference type="InterPro" id="IPR001576">
    <property type="entry name" value="Phosphoglycerate_kinase"/>
</dbReference>
<dbReference type="InterPro" id="IPR015911">
    <property type="entry name" value="Phosphoglycerate_kinase_CS"/>
</dbReference>
<dbReference type="InterPro" id="IPR015824">
    <property type="entry name" value="Phosphoglycerate_kinase_N"/>
</dbReference>
<dbReference type="InterPro" id="IPR036043">
    <property type="entry name" value="Phosphoglycerate_kinase_sf"/>
</dbReference>
<dbReference type="PANTHER" id="PTHR11406">
    <property type="entry name" value="PHOSPHOGLYCERATE KINASE"/>
    <property type="match status" value="1"/>
</dbReference>
<dbReference type="PANTHER" id="PTHR11406:SF23">
    <property type="entry name" value="PHOSPHOGLYCERATE KINASE 1, CHLOROPLASTIC-RELATED"/>
    <property type="match status" value="1"/>
</dbReference>
<dbReference type="Pfam" id="PF00162">
    <property type="entry name" value="PGK"/>
    <property type="match status" value="1"/>
</dbReference>
<dbReference type="PIRSF" id="PIRSF000724">
    <property type="entry name" value="Pgk"/>
    <property type="match status" value="1"/>
</dbReference>
<dbReference type="PRINTS" id="PR00477">
    <property type="entry name" value="PHGLYCKINASE"/>
</dbReference>
<dbReference type="SUPFAM" id="SSF53748">
    <property type="entry name" value="Phosphoglycerate kinase"/>
    <property type="match status" value="1"/>
</dbReference>
<dbReference type="PROSITE" id="PS00111">
    <property type="entry name" value="PGLYCERATE_KINASE"/>
    <property type="match status" value="1"/>
</dbReference>